<comment type="function">
    <text evidence="1">Attaches a formyl group to the free amino group of methionyl-tRNA(fMet). The formyl group appears to play a dual role in the initiator identity of N-formylmethionyl-tRNA by promoting its recognition by IF2 and preventing the misappropriation of this tRNA by the elongation apparatus.</text>
</comment>
<comment type="catalytic activity">
    <reaction evidence="1">
        <text>L-methionyl-tRNA(fMet) + (6R)-10-formyltetrahydrofolate = N-formyl-L-methionyl-tRNA(fMet) + (6S)-5,6,7,8-tetrahydrofolate + H(+)</text>
        <dbReference type="Rhea" id="RHEA:24380"/>
        <dbReference type="Rhea" id="RHEA-COMP:9952"/>
        <dbReference type="Rhea" id="RHEA-COMP:9953"/>
        <dbReference type="ChEBI" id="CHEBI:15378"/>
        <dbReference type="ChEBI" id="CHEBI:57453"/>
        <dbReference type="ChEBI" id="CHEBI:78530"/>
        <dbReference type="ChEBI" id="CHEBI:78844"/>
        <dbReference type="ChEBI" id="CHEBI:195366"/>
        <dbReference type="EC" id="2.1.2.9"/>
    </reaction>
</comment>
<comment type="similarity">
    <text evidence="1">Belongs to the Fmt family.</text>
</comment>
<proteinExistence type="inferred from homology"/>
<organism>
    <name type="scientific">Paraburkholderia phytofirmans (strain DSM 17436 / LMG 22146 / PsJN)</name>
    <name type="common">Burkholderia phytofirmans</name>
    <dbReference type="NCBI Taxonomy" id="398527"/>
    <lineage>
        <taxon>Bacteria</taxon>
        <taxon>Pseudomonadati</taxon>
        <taxon>Pseudomonadota</taxon>
        <taxon>Betaproteobacteria</taxon>
        <taxon>Burkholderiales</taxon>
        <taxon>Burkholderiaceae</taxon>
        <taxon>Paraburkholderia</taxon>
    </lineage>
</organism>
<feature type="chain" id="PRO_1000098388" description="Methionyl-tRNA formyltransferase">
    <location>
        <begin position="1"/>
        <end position="328"/>
    </location>
</feature>
<feature type="binding site" evidence="1">
    <location>
        <begin position="121"/>
        <end position="124"/>
    </location>
    <ligand>
        <name>(6S)-5,6,7,8-tetrahydrofolate</name>
        <dbReference type="ChEBI" id="CHEBI:57453"/>
    </ligand>
</feature>
<accession>B2T1K6</accession>
<evidence type="ECO:0000255" key="1">
    <source>
        <dbReference type="HAMAP-Rule" id="MF_00182"/>
    </source>
</evidence>
<name>FMT_PARPJ</name>
<protein>
    <recommendedName>
        <fullName evidence="1">Methionyl-tRNA formyltransferase</fullName>
        <ecNumber evidence="1">2.1.2.9</ecNumber>
    </recommendedName>
</protein>
<gene>
    <name evidence="1" type="primary">fmt</name>
    <name type="ordered locus">Bphyt_0310</name>
</gene>
<reference key="1">
    <citation type="journal article" date="2011" name="J. Bacteriol.">
        <title>Complete genome sequence of the plant growth-promoting endophyte Burkholderia phytofirmans strain PsJN.</title>
        <authorList>
            <person name="Weilharter A."/>
            <person name="Mitter B."/>
            <person name="Shin M.V."/>
            <person name="Chain P.S."/>
            <person name="Nowak J."/>
            <person name="Sessitsch A."/>
        </authorList>
    </citation>
    <scope>NUCLEOTIDE SEQUENCE [LARGE SCALE GENOMIC DNA]</scope>
    <source>
        <strain>DSM 17436 / LMG 22146 / PsJN</strain>
    </source>
</reference>
<sequence length="328" mass="34584">MSHSLRVIFAGTPEFAAAALAAIHSAGFQVPLVLTQPDRPAGRGMKLQASPVKRYAQEHGLAVAQPPSLRRVGKYPAEAAAAIDQLRATPHDVMVVAAYGLILPQEVLDIPLLGCINIHASLLPRWRGAAPIHRAIEAGDAETGITLMQMDVGLDTGAMISEARTAITADDTTATLHDRLAQDGAKLIVEALIELERTGKLAATPQPAEGVTYAEKIGKHEAALDWRRPAAVLARQVRAFDPFPGGVATLEDGTSIKLWAAVARDTQANGAPGTITDVSPEGVVVACGEGALRLTQLQKPGGKRLPVREFLAGSTLAVGQRFQLPETK</sequence>
<keyword id="KW-0648">Protein biosynthesis</keyword>
<keyword id="KW-0808">Transferase</keyword>
<dbReference type="EC" id="2.1.2.9" evidence="1"/>
<dbReference type="EMBL" id="CP001052">
    <property type="protein sequence ID" value="ACD14735.1"/>
    <property type="molecule type" value="Genomic_DNA"/>
</dbReference>
<dbReference type="RefSeq" id="WP_012431380.1">
    <property type="nucleotide sequence ID" value="NC_010681.1"/>
</dbReference>
<dbReference type="SMR" id="B2T1K6"/>
<dbReference type="STRING" id="398527.Bphyt_0310"/>
<dbReference type="KEGG" id="bpy:Bphyt_0310"/>
<dbReference type="eggNOG" id="COG0223">
    <property type="taxonomic scope" value="Bacteria"/>
</dbReference>
<dbReference type="HOGENOM" id="CLU_033347_1_2_4"/>
<dbReference type="OrthoDB" id="9802815at2"/>
<dbReference type="Proteomes" id="UP000001739">
    <property type="component" value="Chromosome 1"/>
</dbReference>
<dbReference type="GO" id="GO:0005829">
    <property type="term" value="C:cytosol"/>
    <property type="evidence" value="ECO:0007669"/>
    <property type="project" value="TreeGrafter"/>
</dbReference>
<dbReference type="GO" id="GO:0004479">
    <property type="term" value="F:methionyl-tRNA formyltransferase activity"/>
    <property type="evidence" value="ECO:0007669"/>
    <property type="project" value="UniProtKB-UniRule"/>
</dbReference>
<dbReference type="CDD" id="cd08646">
    <property type="entry name" value="FMT_core_Met-tRNA-FMT_N"/>
    <property type="match status" value="1"/>
</dbReference>
<dbReference type="CDD" id="cd08704">
    <property type="entry name" value="Met_tRNA_FMT_C"/>
    <property type="match status" value="1"/>
</dbReference>
<dbReference type="FunFam" id="3.40.50.12230:FF:000001">
    <property type="entry name" value="Methionyl-tRNA formyltransferase"/>
    <property type="match status" value="1"/>
</dbReference>
<dbReference type="Gene3D" id="3.10.25.10">
    <property type="entry name" value="Formyl transferase, C-terminal domain"/>
    <property type="match status" value="1"/>
</dbReference>
<dbReference type="Gene3D" id="3.40.50.170">
    <property type="entry name" value="Formyl transferase, N-terminal domain"/>
    <property type="match status" value="1"/>
</dbReference>
<dbReference type="HAMAP" id="MF_00182">
    <property type="entry name" value="Formyl_trans"/>
    <property type="match status" value="1"/>
</dbReference>
<dbReference type="InterPro" id="IPR005794">
    <property type="entry name" value="Fmt"/>
</dbReference>
<dbReference type="InterPro" id="IPR005793">
    <property type="entry name" value="Formyl_trans_C"/>
</dbReference>
<dbReference type="InterPro" id="IPR037022">
    <property type="entry name" value="Formyl_trans_C_sf"/>
</dbReference>
<dbReference type="InterPro" id="IPR002376">
    <property type="entry name" value="Formyl_transf_N"/>
</dbReference>
<dbReference type="InterPro" id="IPR036477">
    <property type="entry name" value="Formyl_transf_N_sf"/>
</dbReference>
<dbReference type="InterPro" id="IPR011034">
    <property type="entry name" value="Formyl_transferase-like_C_sf"/>
</dbReference>
<dbReference type="InterPro" id="IPR001555">
    <property type="entry name" value="GART_AS"/>
</dbReference>
<dbReference type="InterPro" id="IPR044135">
    <property type="entry name" value="Met-tRNA-FMT_C"/>
</dbReference>
<dbReference type="InterPro" id="IPR041711">
    <property type="entry name" value="Met-tRNA-FMT_N"/>
</dbReference>
<dbReference type="NCBIfam" id="TIGR00460">
    <property type="entry name" value="fmt"/>
    <property type="match status" value="1"/>
</dbReference>
<dbReference type="PANTHER" id="PTHR11138">
    <property type="entry name" value="METHIONYL-TRNA FORMYLTRANSFERASE"/>
    <property type="match status" value="1"/>
</dbReference>
<dbReference type="PANTHER" id="PTHR11138:SF5">
    <property type="entry name" value="METHIONYL-TRNA FORMYLTRANSFERASE, MITOCHONDRIAL"/>
    <property type="match status" value="1"/>
</dbReference>
<dbReference type="Pfam" id="PF02911">
    <property type="entry name" value="Formyl_trans_C"/>
    <property type="match status" value="1"/>
</dbReference>
<dbReference type="Pfam" id="PF00551">
    <property type="entry name" value="Formyl_trans_N"/>
    <property type="match status" value="1"/>
</dbReference>
<dbReference type="SUPFAM" id="SSF50486">
    <property type="entry name" value="FMT C-terminal domain-like"/>
    <property type="match status" value="1"/>
</dbReference>
<dbReference type="SUPFAM" id="SSF53328">
    <property type="entry name" value="Formyltransferase"/>
    <property type="match status" value="1"/>
</dbReference>
<dbReference type="PROSITE" id="PS00373">
    <property type="entry name" value="GART"/>
    <property type="match status" value="1"/>
</dbReference>